<evidence type="ECO:0000255" key="1">
    <source>
        <dbReference type="HAMAP-Rule" id="MF_01967"/>
    </source>
</evidence>
<evidence type="ECO:0000255" key="2">
    <source>
        <dbReference type="PROSITE-ProRule" id="PRU00236"/>
    </source>
</evidence>
<reference key="1">
    <citation type="journal article" date="2002" name="Nature">
        <title>Complete genome sequence of the model actinomycete Streptomyces coelicolor A3(2).</title>
        <authorList>
            <person name="Bentley S.D."/>
            <person name="Chater K.F."/>
            <person name="Cerdeno-Tarraga A.-M."/>
            <person name="Challis G.L."/>
            <person name="Thomson N.R."/>
            <person name="James K.D."/>
            <person name="Harris D.E."/>
            <person name="Quail M.A."/>
            <person name="Kieser H."/>
            <person name="Harper D."/>
            <person name="Bateman A."/>
            <person name="Brown S."/>
            <person name="Chandra G."/>
            <person name="Chen C.W."/>
            <person name="Collins M."/>
            <person name="Cronin A."/>
            <person name="Fraser A."/>
            <person name="Goble A."/>
            <person name="Hidalgo J."/>
            <person name="Hornsby T."/>
            <person name="Howarth S."/>
            <person name="Huang C.-H."/>
            <person name="Kieser T."/>
            <person name="Larke L."/>
            <person name="Murphy L.D."/>
            <person name="Oliver K."/>
            <person name="O'Neil S."/>
            <person name="Rabbinowitsch E."/>
            <person name="Rajandream M.A."/>
            <person name="Rutherford K.M."/>
            <person name="Rutter S."/>
            <person name="Seeger K."/>
            <person name="Saunders D."/>
            <person name="Sharp S."/>
            <person name="Squares R."/>
            <person name="Squares S."/>
            <person name="Taylor K."/>
            <person name="Warren T."/>
            <person name="Wietzorrek A."/>
            <person name="Woodward J.R."/>
            <person name="Barrell B.G."/>
            <person name="Parkhill J."/>
            <person name="Hopwood D.A."/>
        </authorList>
    </citation>
    <scope>NUCLEOTIDE SEQUENCE [LARGE SCALE GENOMIC DNA]</scope>
    <source>
        <strain>ATCC BAA-471 / A3(2) / M145</strain>
    </source>
</reference>
<organism>
    <name type="scientific">Streptomyces coelicolor (strain ATCC BAA-471 / A3(2) / M145)</name>
    <dbReference type="NCBI Taxonomy" id="100226"/>
    <lineage>
        <taxon>Bacteria</taxon>
        <taxon>Bacillati</taxon>
        <taxon>Actinomycetota</taxon>
        <taxon>Actinomycetes</taxon>
        <taxon>Kitasatosporales</taxon>
        <taxon>Streptomycetaceae</taxon>
        <taxon>Streptomyces</taxon>
        <taxon>Streptomyces albidoflavus group</taxon>
    </lineage>
</organism>
<sequence length="299" mass="31559">MRMRPTLSWTPGADLPPGTTDLAPVADALRAGGVLVLSGAGISTESGIPDYRGEGGSLSRHTPMTYQDFTAHPEARRRYWARSHLGWRTFGRARPNAGHRSVAAFGRHGLLTGVITQNVDGLHQAAGSEGVVELHGSLDRVVCLSCGVLSPRRELARRLEEANAGFSPVAAGINPDGDADLTDEQVGDFRVVPCAVCGGVLKPDVVFFGENVPPRRVEHCRELVRGASSLLVLGSSLTVMSGLRFVRQAAEAGKPVLIVNRDATRGDRLAVTRVALPLGPALTTVADRLGLRVGDAATA</sequence>
<comment type="function">
    <text evidence="1">NAD-dependent protein deacetylase which modulates the activities of several enzymes which are inactive in their acetylated form.</text>
</comment>
<comment type="catalytic activity">
    <reaction evidence="1">
        <text>N(6)-acetyl-L-lysyl-[protein] + NAD(+) + H2O = 2''-O-acetyl-ADP-D-ribose + nicotinamide + L-lysyl-[protein]</text>
        <dbReference type="Rhea" id="RHEA:43636"/>
        <dbReference type="Rhea" id="RHEA-COMP:9752"/>
        <dbReference type="Rhea" id="RHEA-COMP:10731"/>
        <dbReference type="ChEBI" id="CHEBI:15377"/>
        <dbReference type="ChEBI" id="CHEBI:17154"/>
        <dbReference type="ChEBI" id="CHEBI:29969"/>
        <dbReference type="ChEBI" id="CHEBI:57540"/>
        <dbReference type="ChEBI" id="CHEBI:61930"/>
        <dbReference type="ChEBI" id="CHEBI:83767"/>
        <dbReference type="EC" id="2.3.1.286"/>
    </reaction>
</comment>
<comment type="cofactor">
    <cofactor evidence="1">
        <name>Zn(2+)</name>
        <dbReference type="ChEBI" id="CHEBI:29105"/>
    </cofactor>
    <text evidence="1">Binds 1 zinc ion per subunit.</text>
</comment>
<comment type="subcellular location">
    <subcellularLocation>
        <location evidence="1">Cytoplasm</location>
    </subcellularLocation>
</comment>
<comment type="similarity">
    <text evidence="1">Belongs to the sirtuin family. Class II subfamily.</text>
</comment>
<feature type="chain" id="PRO_0000110359" description="NAD-dependent protein deacetylase 1">
    <location>
        <begin position="1"/>
        <end position="299"/>
    </location>
</feature>
<feature type="domain" description="Deacetylase sirtuin-type" evidence="2">
    <location>
        <begin position="15"/>
        <end position="292"/>
    </location>
</feature>
<feature type="active site" description="Proton acceptor" evidence="2">
    <location>
        <position position="135"/>
    </location>
</feature>
<feature type="binding site" evidence="1">
    <location>
        <begin position="39"/>
        <end position="59"/>
    </location>
    <ligand>
        <name>NAD(+)</name>
        <dbReference type="ChEBI" id="CHEBI:57540"/>
    </ligand>
</feature>
<feature type="binding site" evidence="1">
    <location>
        <begin position="117"/>
        <end position="120"/>
    </location>
    <ligand>
        <name>NAD(+)</name>
        <dbReference type="ChEBI" id="CHEBI:57540"/>
    </ligand>
</feature>
<feature type="binding site" evidence="1">
    <location>
        <position position="143"/>
    </location>
    <ligand>
        <name>Zn(2+)</name>
        <dbReference type="ChEBI" id="CHEBI:29105"/>
    </ligand>
</feature>
<feature type="binding site" evidence="1">
    <location>
        <position position="146"/>
    </location>
    <ligand>
        <name>Zn(2+)</name>
        <dbReference type="ChEBI" id="CHEBI:29105"/>
    </ligand>
</feature>
<feature type="binding site" evidence="1">
    <location>
        <position position="194"/>
    </location>
    <ligand>
        <name>Zn(2+)</name>
        <dbReference type="ChEBI" id="CHEBI:29105"/>
    </ligand>
</feature>
<feature type="binding site" evidence="1">
    <location>
        <position position="197"/>
    </location>
    <ligand>
        <name>Zn(2+)</name>
        <dbReference type="ChEBI" id="CHEBI:29105"/>
    </ligand>
</feature>
<feature type="binding site" evidence="1">
    <location>
        <begin position="234"/>
        <end position="236"/>
    </location>
    <ligand>
        <name>NAD(+)</name>
        <dbReference type="ChEBI" id="CHEBI:57540"/>
    </ligand>
</feature>
<feature type="binding site" evidence="1">
    <location>
        <position position="278"/>
    </location>
    <ligand>
        <name>NAD(+)</name>
        <dbReference type="ChEBI" id="CHEBI:57540"/>
    </ligand>
</feature>
<protein>
    <recommendedName>
        <fullName evidence="1">NAD-dependent protein deacetylase 1</fullName>
        <ecNumber evidence="1 2">2.3.1.286</ecNumber>
    </recommendedName>
    <alternativeName>
        <fullName evidence="1">Regulatory protein SIR2 homolog 1</fullName>
    </alternativeName>
</protein>
<name>NPD1_STRCO</name>
<gene>
    <name evidence="1" type="primary">cobB1</name>
    <name type="ordered locus">SCO0452</name>
    <name type="ORF">SCF51A.30</name>
</gene>
<accession>Q9RL35</accession>
<proteinExistence type="inferred from homology"/>
<dbReference type="EC" id="2.3.1.286" evidence="1 2"/>
<dbReference type="EMBL" id="AL939105">
    <property type="protein sequence ID" value="CAB56682.1"/>
    <property type="molecule type" value="Genomic_DNA"/>
</dbReference>
<dbReference type="RefSeq" id="NP_624772.1">
    <property type="nucleotide sequence ID" value="NC_003888.3"/>
</dbReference>
<dbReference type="RefSeq" id="WP_011027127.1">
    <property type="nucleotide sequence ID" value="NZ_VNID01000015.1"/>
</dbReference>
<dbReference type="SMR" id="Q9RL35"/>
<dbReference type="STRING" id="100226.gene:17758035"/>
<dbReference type="PaxDb" id="100226-SCO0452"/>
<dbReference type="KEGG" id="sco:SCO0452"/>
<dbReference type="PATRIC" id="fig|100226.15.peg.430"/>
<dbReference type="eggNOG" id="COG0846">
    <property type="taxonomic scope" value="Bacteria"/>
</dbReference>
<dbReference type="HOGENOM" id="CLU_023643_3_2_11"/>
<dbReference type="InParanoid" id="Q9RL35"/>
<dbReference type="OrthoDB" id="9800582at2"/>
<dbReference type="PhylomeDB" id="Q9RL35"/>
<dbReference type="Proteomes" id="UP000001973">
    <property type="component" value="Chromosome"/>
</dbReference>
<dbReference type="GO" id="GO:0005737">
    <property type="term" value="C:cytoplasm"/>
    <property type="evidence" value="ECO:0007669"/>
    <property type="project" value="UniProtKB-SubCell"/>
</dbReference>
<dbReference type="GO" id="GO:0017136">
    <property type="term" value="F:histone deacetylase activity, NAD-dependent"/>
    <property type="evidence" value="ECO:0000318"/>
    <property type="project" value="GO_Central"/>
</dbReference>
<dbReference type="GO" id="GO:0070403">
    <property type="term" value="F:NAD+ binding"/>
    <property type="evidence" value="ECO:0000318"/>
    <property type="project" value="GO_Central"/>
</dbReference>
<dbReference type="GO" id="GO:0008270">
    <property type="term" value="F:zinc ion binding"/>
    <property type="evidence" value="ECO:0007669"/>
    <property type="project" value="UniProtKB-UniRule"/>
</dbReference>
<dbReference type="CDD" id="cd01409">
    <property type="entry name" value="SIRT4"/>
    <property type="match status" value="1"/>
</dbReference>
<dbReference type="Gene3D" id="3.30.1600.10">
    <property type="entry name" value="SIR2/SIRT2 'Small Domain"/>
    <property type="match status" value="1"/>
</dbReference>
<dbReference type="Gene3D" id="3.40.50.1220">
    <property type="entry name" value="TPP-binding domain"/>
    <property type="match status" value="1"/>
</dbReference>
<dbReference type="HAMAP" id="MF_01967">
    <property type="entry name" value="Sirtuin_ClassII"/>
    <property type="match status" value="1"/>
</dbReference>
<dbReference type="InterPro" id="IPR029035">
    <property type="entry name" value="DHS-like_NAD/FAD-binding_dom"/>
</dbReference>
<dbReference type="InterPro" id="IPR050134">
    <property type="entry name" value="NAD-dep_sirtuin_deacylases"/>
</dbReference>
<dbReference type="InterPro" id="IPR003000">
    <property type="entry name" value="Sirtuin"/>
</dbReference>
<dbReference type="InterPro" id="IPR026591">
    <property type="entry name" value="Sirtuin_cat_small_dom_sf"/>
</dbReference>
<dbReference type="InterPro" id="IPR026587">
    <property type="entry name" value="Sirtuin_class_II"/>
</dbReference>
<dbReference type="InterPro" id="IPR026590">
    <property type="entry name" value="Ssirtuin_cat_dom"/>
</dbReference>
<dbReference type="NCBIfam" id="NF003738">
    <property type="entry name" value="PRK05333.1"/>
    <property type="match status" value="1"/>
</dbReference>
<dbReference type="PANTHER" id="PTHR11085">
    <property type="entry name" value="NAD-DEPENDENT PROTEIN DEACYLASE SIRTUIN-5, MITOCHONDRIAL-RELATED"/>
    <property type="match status" value="1"/>
</dbReference>
<dbReference type="PANTHER" id="PTHR11085:SF10">
    <property type="entry name" value="NAD-DEPENDENT PROTEIN DEACYLASE SIRTUIN-5, MITOCHONDRIAL-RELATED"/>
    <property type="match status" value="1"/>
</dbReference>
<dbReference type="Pfam" id="PF02146">
    <property type="entry name" value="SIR2"/>
    <property type="match status" value="1"/>
</dbReference>
<dbReference type="SUPFAM" id="SSF52467">
    <property type="entry name" value="DHS-like NAD/FAD-binding domain"/>
    <property type="match status" value="1"/>
</dbReference>
<dbReference type="PROSITE" id="PS50305">
    <property type="entry name" value="SIRTUIN"/>
    <property type="match status" value="1"/>
</dbReference>
<keyword id="KW-0963">Cytoplasm</keyword>
<keyword id="KW-0479">Metal-binding</keyword>
<keyword id="KW-0520">NAD</keyword>
<keyword id="KW-1185">Reference proteome</keyword>
<keyword id="KW-0808">Transferase</keyword>
<keyword id="KW-0862">Zinc</keyword>